<keyword id="KW-0002">3D-structure</keyword>
<keyword id="KW-0025">Alternative splicing</keyword>
<keyword id="KW-0121">Carboxypeptidase</keyword>
<keyword id="KW-0903">Direct protein sequencing</keyword>
<keyword id="KW-1015">Disulfide bond</keyword>
<keyword id="KW-0325">Glycoprotein</keyword>
<keyword id="KW-0378">Hydrolase</keyword>
<keyword id="KW-0458">Lysosome</keyword>
<keyword id="KW-0645">Protease</keyword>
<keyword id="KW-1267">Proteomics identification</keyword>
<keyword id="KW-1185">Reference proteome</keyword>
<keyword id="KW-0732">Signal</keyword>
<keyword id="KW-0865">Zymogen</keyword>
<name>PCP_HUMAN</name>
<comment type="function">
    <text>Cleaves C-terminal amino acids linked to proline in peptides such as angiotensin II, III and des-Arg9-bradykinin. This cleavage occurs at acidic pH, but enzymatic activity is retained with some substrates at neutral pH.</text>
</comment>
<comment type="catalytic activity">
    <reaction>
        <text>Cleavage of a -Pro-|-Xaa bond to release a C-terminal amino acid.</text>
        <dbReference type="EC" id="3.4.16.2"/>
    </reaction>
</comment>
<comment type="subunit">
    <text evidence="4">Homodimer.</text>
</comment>
<comment type="interaction">
    <interactant intactId="EBI-2803892">
        <id>P42785</id>
    </interactant>
    <interactant intactId="EBI-2927498">
        <id>O60883</id>
        <label>GPR37L1</label>
    </interactant>
    <organismsDiffer>false</organismsDiffer>
    <experiments>2</experiments>
</comment>
<comment type="subcellular location">
    <subcellularLocation>
        <location>Lysosome</location>
    </subcellularLocation>
</comment>
<comment type="alternative products">
    <event type="alternative splicing"/>
    <isoform>
        <id>P42785-1</id>
        <name>1</name>
        <sequence type="displayed"/>
    </isoform>
    <isoform>
        <id>P42785-2</id>
        <name>2</name>
        <sequence type="described" ref="VSP_045799"/>
    </isoform>
</comment>
<comment type="tissue specificity">
    <text>Highest levels in placenta, lung and liver. Also present in heart, brain, pancreas and kidney.</text>
</comment>
<comment type="similarity">
    <text evidence="6">Belongs to the peptidase S28 family.</text>
</comment>
<gene>
    <name type="primary">PRCP</name>
    <name type="synonym">PCP</name>
</gene>
<accession>P42785</accession>
<accession>A8MU24</accession>
<accession>B2R7B7</accession>
<accession>B3KRK5</accession>
<accession>B5BU34</accession>
<evidence type="ECO:0000255" key="1"/>
<evidence type="ECO:0000269" key="2">
    <source>
    </source>
</evidence>
<evidence type="ECO:0000269" key="3">
    <source>
    </source>
</evidence>
<evidence type="ECO:0000269" key="4">
    <source>
    </source>
</evidence>
<evidence type="ECO:0000303" key="5">
    <source>
    </source>
</evidence>
<evidence type="ECO:0000305" key="6"/>
<evidence type="ECO:0007829" key="7">
    <source>
        <dbReference type="PDB" id="3N2Z"/>
    </source>
</evidence>
<sequence length="496" mass="55800">MGRRALLLLLLSFLAPWATIALRPALRALGSLHLPTNPTSLPAVAKNYSVLYFQQKVDHFGFNTVKTFNQRYLVADKYWKKNGGSILFYTGNEGDIIWFCNNTGFMWDVAEELKAMLVFAEHRYYGESLPFGDNSFKDSRHLNFLTSEQALADFAELIKHLKRTIPGAENQPVIAIGGSYGGMLAAWFRMKYPHMVVGALAASAPIWQFEDLVPCGVFMKIVTTDFRKSGPHCSESIHRSWDAINRLSNTGSGLQWLTGALHLCSPLTSQDIQHLKDWISETWVNLAMVDYPYASNFLQPLPAWPIKVVCQYLKNPNVSDSLLLQNIFQALNVYYNYSGQVKCLNISETATSSLGTLGWSYQACTEVVMPFCTNGVDDMFEPHSWNLKELSDDCFQQWGVRPRPSWITTMYGGKNISSHTNIVFSNGELDPWSGGGVTKDITDTLVAVTISEGAHHLDLRTKNALDPMSVLLARSLEVRHMKNWIRDFYDSAGKQH</sequence>
<reference key="1">
    <citation type="journal article" date="1993" name="J. Biol. Chem.">
        <title>Sequencing and cloning of human prolylcarboxypeptidase (angiotensinase C). Similarity to both serine carboxypeptidase and prolylendopeptidase families.</title>
        <authorList>
            <person name="Tan F."/>
            <person name="Morris P.W."/>
            <person name="Skidgel R.A."/>
            <person name="Erdoes E.G."/>
        </authorList>
    </citation>
    <scope>NUCLEOTIDE SEQUENCE [MRNA] (ISOFORM 1)</scope>
    <scope>PARTIAL PROTEIN SEQUENCE</scope>
    <source>
        <tissue>Kidney</tissue>
    </source>
</reference>
<reference key="2">
    <citation type="journal article" date="1993" name="J. Biol. Chem.">
        <authorList>
            <person name="Tan F."/>
            <person name="Morris P.W."/>
            <person name="Skidgel R.A."/>
            <person name="Erdoes E.G."/>
        </authorList>
    </citation>
    <scope>ERRATUM OF PUBMED:8344943</scope>
</reference>
<reference key="3">
    <citation type="journal article" date="2004" name="Nat. Genet.">
        <title>Complete sequencing and characterization of 21,243 full-length human cDNAs.</title>
        <authorList>
            <person name="Ota T."/>
            <person name="Suzuki Y."/>
            <person name="Nishikawa T."/>
            <person name="Otsuki T."/>
            <person name="Sugiyama T."/>
            <person name="Irie R."/>
            <person name="Wakamatsu A."/>
            <person name="Hayashi K."/>
            <person name="Sato H."/>
            <person name="Nagai K."/>
            <person name="Kimura K."/>
            <person name="Makita H."/>
            <person name="Sekine M."/>
            <person name="Obayashi M."/>
            <person name="Nishi T."/>
            <person name="Shibahara T."/>
            <person name="Tanaka T."/>
            <person name="Ishii S."/>
            <person name="Yamamoto J."/>
            <person name="Saito K."/>
            <person name="Kawai Y."/>
            <person name="Isono Y."/>
            <person name="Nakamura Y."/>
            <person name="Nagahari K."/>
            <person name="Murakami K."/>
            <person name="Yasuda T."/>
            <person name="Iwayanagi T."/>
            <person name="Wagatsuma M."/>
            <person name="Shiratori A."/>
            <person name="Sudo H."/>
            <person name="Hosoiri T."/>
            <person name="Kaku Y."/>
            <person name="Kodaira H."/>
            <person name="Kondo H."/>
            <person name="Sugawara M."/>
            <person name="Takahashi M."/>
            <person name="Kanda K."/>
            <person name="Yokoi T."/>
            <person name="Furuya T."/>
            <person name="Kikkawa E."/>
            <person name="Omura Y."/>
            <person name="Abe K."/>
            <person name="Kamihara K."/>
            <person name="Katsuta N."/>
            <person name="Sato K."/>
            <person name="Tanikawa M."/>
            <person name="Yamazaki M."/>
            <person name="Ninomiya K."/>
            <person name="Ishibashi T."/>
            <person name="Yamashita H."/>
            <person name="Murakawa K."/>
            <person name="Fujimori K."/>
            <person name="Tanai H."/>
            <person name="Kimata M."/>
            <person name="Watanabe M."/>
            <person name="Hiraoka S."/>
            <person name="Chiba Y."/>
            <person name="Ishida S."/>
            <person name="Ono Y."/>
            <person name="Takiguchi S."/>
            <person name="Watanabe S."/>
            <person name="Yosida M."/>
            <person name="Hotuta T."/>
            <person name="Kusano J."/>
            <person name="Kanehori K."/>
            <person name="Takahashi-Fujii A."/>
            <person name="Hara H."/>
            <person name="Tanase T.-O."/>
            <person name="Nomura Y."/>
            <person name="Togiya S."/>
            <person name="Komai F."/>
            <person name="Hara R."/>
            <person name="Takeuchi K."/>
            <person name="Arita M."/>
            <person name="Imose N."/>
            <person name="Musashino K."/>
            <person name="Yuuki H."/>
            <person name="Oshima A."/>
            <person name="Sasaki N."/>
            <person name="Aotsuka S."/>
            <person name="Yoshikawa Y."/>
            <person name="Matsunawa H."/>
            <person name="Ichihara T."/>
            <person name="Shiohata N."/>
            <person name="Sano S."/>
            <person name="Moriya S."/>
            <person name="Momiyama H."/>
            <person name="Satoh N."/>
            <person name="Takami S."/>
            <person name="Terashima Y."/>
            <person name="Suzuki O."/>
            <person name="Nakagawa S."/>
            <person name="Senoh A."/>
            <person name="Mizoguchi H."/>
            <person name="Goto Y."/>
            <person name="Shimizu F."/>
            <person name="Wakebe H."/>
            <person name="Hishigaki H."/>
            <person name="Watanabe T."/>
            <person name="Sugiyama A."/>
            <person name="Takemoto M."/>
            <person name="Kawakami B."/>
            <person name="Yamazaki M."/>
            <person name="Watanabe K."/>
            <person name="Kumagai A."/>
            <person name="Itakura S."/>
            <person name="Fukuzumi Y."/>
            <person name="Fujimori Y."/>
            <person name="Komiyama M."/>
            <person name="Tashiro H."/>
            <person name="Tanigami A."/>
            <person name="Fujiwara T."/>
            <person name="Ono T."/>
            <person name="Yamada K."/>
            <person name="Fujii Y."/>
            <person name="Ozaki K."/>
            <person name="Hirao M."/>
            <person name="Ohmori Y."/>
            <person name="Kawabata A."/>
            <person name="Hikiji T."/>
            <person name="Kobatake N."/>
            <person name="Inagaki H."/>
            <person name="Ikema Y."/>
            <person name="Okamoto S."/>
            <person name="Okitani R."/>
            <person name="Kawakami T."/>
            <person name="Noguchi S."/>
            <person name="Itoh T."/>
            <person name="Shigeta K."/>
            <person name="Senba T."/>
            <person name="Matsumura K."/>
            <person name="Nakajima Y."/>
            <person name="Mizuno T."/>
            <person name="Morinaga M."/>
            <person name="Sasaki M."/>
            <person name="Togashi T."/>
            <person name="Oyama M."/>
            <person name="Hata H."/>
            <person name="Watanabe M."/>
            <person name="Komatsu T."/>
            <person name="Mizushima-Sugano J."/>
            <person name="Satoh T."/>
            <person name="Shirai Y."/>
            <person name="Takahashi Y."/>
            <person name="Nakagawa K."/>
            <person name="Okumura K."/>
            <person name="Nagase T."/>
            <person name="Nomura N."/>
            <person name="Kikuchi H."/>
            <person name="Masuho Y."/>
            <person name="Yamashita R."/>
            <person name="Nakai K."/>
            <person name="Yada T."/>
            <person name="Nakamura Y."/>
            <person name="Ohara O."/>
            <person name="Isogai T."/>
            <person name="Sugano S."/>
        </authorList>
    </citation>
    <scope>NUCLEOTIDE SEQUENCE [LARGE SCALE MRNA] (ISOFORMS 1 AND 2)</scope>
    <scope>VARIANT ASP-112</scope>
    <source>
        <tissue>Kidney</tissue>
        <tissue>Lung</tissue>
    </source>
</reference>
<reference key="4">
    <citation type="journal article" date="2008" name="Nat. Methods">
        <title>Human protein factory for converting the transcriptome into an in vitro-expressed proteome.</title>
        <authorList>
            <person name="Goshima N."/>
            <person name="Kawamura Y."/>
            <person name="Fukumoto A."/>
            <person name="Miura A."/>
            <person name="Honma R."/>
            <person name="Satoh R."/>
            <person name="Wakamatsu A."/>
            <person name="Yamamoto J."/>
            <person name="Kimura K."/>
            <person name="Nishikawa T."/>
            <person name="Andoh T."/>
            <person name="Iida Y."/>
            <person name="Ishikawa K."/>
            <person name="Ito E."/>
            <person name="Kagawa N."/>
            <person name="Kaminaga C."/>
            <person name="Kanehori K."/>
            <person name="Kawakami B."/>
            <person name="Kenmochi K."/>
            <person name="Kimura R."/>
            <person name="Kobayashi M."/>
            <person name="Kuroita T."/>
            <person name="Kuwayama H."/>
            <person name="Maruyama Y."/>
            <person name="Matsuo K."/>
            <person name="Minami K."/>
            <person name="Mitsubori M."/>
            <person name="Mori M."/>
            <person name="Morishita R."/>
            <person name="Murase A."/>
            <person name="Nishikawa A."/>
            <person name="Nishikawa S."/>
            <person name="Okamoto T."/>
            <person name="Sakagami N."/>
            <person name="Sakamoto Y."/>
            <person name="Sasaki Y."/>
            <person name="Seki T."/>
            <person name="Sono S."/>
            <person name="Sugiyama A."/>
            <person name="Sumiya T."/>
            <person name="Takayama T."/>
            <person name="Takayama Y."/>
            <person name="Takeda H."/>
            <person name="Togashi T."/>
            <person name="Yahata K."/>
            <person name="Yamada H."/>
            <person name="Yanagisawa Y."/>
            <person name="Endo Y."/>
            <person name="Imamoto F."/>
            <person name="Kisu Y."/>
            <person name="Tanaka S."/>
            <person name="Isogai T."/>
            <person name="Imai J."/>
            <person name="Watanabe S."/>
            <person name="Nomura N."/>
        </authorList>
    </citation>
    <scope>NUCLEOTIDE SEQUENCE [LARGE SCALE MRNA] (ISOFORM 1)</scope>
</reference>
<reference key="5">
    <citation type="journal article" date="2006" name="Nature">
        <title>Human chromosome 11 DNA sequence and analysis including novel gene identification.</title>
        <authorList>
            <person name="Taylor T.D."/>
            <person name="Noguchi H."/>
            <person name="Totoki Y."/>
            <person name="Toyoda A."/>
            <person name="Kuroki Y."/>
            <person name="Dewar K."/>
            <person name="Lloyd C."/>
            <person name="Itoh T."/>
            <person name="Takeda T."/>
            <person name="Kim D.-W."/>
            <person name="She X."/>
            <person name="Barlow K.F."/>
            <person name="Bloom T."/>
            <person name="Bruford E."/>
            <person name="Chang J.L."/>
            <person name="Cuomo C.A."/>
            <person name="Eichler E."/>
            <person name="FitzGerald M.G."/>
            <person name="Jaffe D.B."/>
            <person name="LaButti K."/>
            <person name="Nicol R."/>
            <person name="Park H.-S."/>
            <person name="Seaman C."/>
            <person name="Sougnez C."/>
            <person name="Yang X."/>
            <person name="Zimmer A.R."/>
            <person name="Zody M.C."/>
            <person name="Birren B.W."/>
            <person name="Nusbaum C."/>
            <person name="Fujiyama A."/>
            <person name="Hattori M."/>
            <person name="Rogers J."/>
            <person name="Lander E.S."/>
            <person name="Sakaki Y."/>
        </authorList>
    </citation>
    <scope>NUCLEOTIDE SEQUENCE [LARGE SCALE GENOMIC DNA]</scope>
</reference>
<reference key="6">
    <citation type="submission" date="2005-07" db="EMBL/GenBank/DDBJ databases">
        <authorList>
            <person name="Mural R.J."/>
            <person name="Istrail S."/>
            <person name="Sutton G.G."/>
            <person name="Florea L."/>
            <person name="Halpern A.L."/>
            <person name="Mobarry C.M."/>
            <person name="Lippert R."/>
            <person name="Walenz B."/>
            <person name="Shatkay H."/>
            <person name="Dew I."/>
            <person name="Miller J.R."/>
            <person name="Flanigan M.J."/>
            <person name="Edwards N.J."/>
            <person name="Bolanos R."/>
            <person name="Fasulo D."/>
            <person name="Halldorsson B.V."/>
            <person name="Hannenhalli S."/>
            <person name="Turner R."/>
            <person name="Yooseph S."/>
            <person name="Lu F."/>
            <person name="Nusskern D.R."/>
            <person name="Shue B.C."/>
            <person name="Zheng X.H."/>
            <person name="Zhong F."/>
            <person name="Delcher A.L."/>
            <person name="Huson D.H."/>
            <person name="Kravitz S.A."/>
            <person name="Mouchard L."/>
            <person name="Reinert K."/>
            <person name="Remington K.A."/>
            <person name="Clark A.G."/>
            <person name="Waterman M.S."/>
            <person name="Eichler E.E."/>
            <person name="Adams M.D."/>
            <person name="Hunkapiller M.W."/>
            <person name="Myers E.W."/>
            <person name="Venter J.C."/>
        </authorList>
    </citation>
    <scope>NUCLEOTIDE SEQUENCE [LARGE SCALE GENOMIC DNA]</scope>
</reference>
<reference key="7">
    <citation type="journal article" date="2004" name="Genome Res.">
        <title>The status, quality, and expansion of the NIH full-length cDNA project: the Mammalian Gene Collection (MGC).</title>
        <authorList>
            <consortium name="The MGC Project Team"/>
        </authorList>
    </citation>
    <scope>NUCLEOTIDE SEQUENCE [LARGE SCALE MRNA] (ISOFORM 1)</scope>
    <source>
        <tissue>Brain</tissue>
    </source>
</reference>
<reference key="8">
    <citation type="journal article" date="1978" name="J. Biol. Chem.">
        <title>Purification and properties of prolylcarboxypeptidase (angiotensinase C) from human kidney.</title>
        <authorList>
            <person name="Odya C.E."/>
            <person name="Marinkovic D.V."/>
            <person name="Hammon K.J."/>
            <person name="Stewart T.A."/>
            <person name="Erdos E.G."/>
        </authorList>
    </citation>
    <scope>CHARACTERIZATION</scope>
    <source>
        <tissue>Kidney</tissue>
    </source>
</reference>
<reference key="9">
    <citation type="journal article" date="2009" name="J. Proteome Res.">
        <title>Glycoproteomics analysis of human liver tissue by combination of multiple enzyme digestion and hydrazide chemistry.</title>
        <authorList>
            <person name="Chen R."/>
            <person name="Jiang X."/>
            <person name="Sun D."/>
            <person name="Han G."/>
            <person name="Wang F."/>
            <person name="Ye M."/>
            <person name="Wang L."/>
            <person name="Zou H."/>
        </authorList>
    </citation>
    <scope>GLYCOSYLATION [LARGE SCALE ANALYSIS] AT ASN-317 AND ASN-415</scope>
    <source>
        <tissue>Liver</tissue>
    </source>
</reference>
<reference key="10">
    <citation type="journal article" date="2011" name="BMC Syst. Biol.">
        <title>Initial characterization of the human central proteome.</title>
        <authorList>
            <person name="Burkard T.R."/>
            <person name="Planyavsky M."/>
            <person name="Kaupe I."/>
            <person name="Breitwieser F.P."/>
            <person name="Buerckstuemmer T."/>
            <person name="Bennett K.L."/>
            <person name="Superti-Furga G."/>
            <person name="Colinge J."/>
        </authorList>
    </citation>
    <scope>IDENTIFICATION BY MASS SPECTROMETRY [LARGE SCALE ANALYSIS]</scope>
</reference>
<reference key="11">
    <citation type="journal article" date="2014" name="J. Proteomics">
        <title>An enzyme assisted RP-RPLC approach for in-depth analysis of human liver phosphoproteome.</title>
        <authorList>
            <person name="Bian Y."/>
            <person name="Song C."/>
            <person name="Cheng K."/>
            <person name="Dong M."/>
            <person name="Wang F."/>
            <person name="Huang J."/>
            <person name="Sun D."/>
            <person name="Wang L."/>
            <person name="Ye M."/>
            <person name="Zou H."/>
        </authorList>
    </citation>
    <scope>IDENTIFICATION BY MASS SPECTROMETRY [LARGE SCALE ANALYSIS]</scope>
    <source>
        <tissue>Liver</tissue>
    </source>
</reference>
<reference key="12">
    <citation type="journal article" date="2015" name="Proteomics">
        <title>N-terminome analysis of the human mitochondrial proteome.</title>
        <authorList>
            <person name="Vaca Jacome A.S."/>
            <person name="Rabilloud T."/>
            <person name="Schaeffer-Reiss C."/>
            <person name="Rompais M."/>
            <person name="Ayoub D."/>
            <person name="Lane L."/>
            <person name="Bairoch A."/>
            <person name="Van Dorsselaer A."/>
            <person name="Carapito C."/>
        </authorList>
    </citation>
    <scope>IDENTIFICATION BY MASS SPECTROMETRY [LARGE SCALE ANALYSIS]</scope>
</reference>
<reference key="13">
    <citation type="journal article" date="2010" name="BMC Struct. Biol.">
        <title>Structural definition and substrate specificity of the S28 protease family: the crystal structure of human prolylcarboxypeptidase.</title>
        <authorList>
            <person name="Soisson S.M."/>
            <person name="Patel S.B."/>
            <person name="Abeywickrema P.D."/>
            <person name="Byrne N.J."/>
            <person name="Diehl R.E."/>
            <person name="Hall D.L."/>
            <person name="Ford R.E."/>
            <person name="Reid J.C."/>
            <person name="Rickert K.W."/>
            <person name="Shipman J.M."/>
            <person name="Sharma S."/>
            <person name="Lumb K.J."/>
        </authorList>
    </citation>
    <scope>X-RAY CRYSTALLOGRAPHY (2.79 ANGSTROMS) OF 46-491</scope>
    <scope>SUBUNIT</scope>
    <scope>DISULFIDE BONDS</scope>
    <scope>ACTIVE SITE</scope>
    <scope>GLYCOSYLATION AT ASN-101; ASN-317; ASN-336; ASN-345 AND ASN-415</scope>
</reference>
<proteinExistence type="evidence at protein level"/>
<organism>
    <name type="scientific">Homo sapiens</name>
    <name type="common">Human</name>
    <dbReference type="NCBI Taxonomy" id="9606"/>
    <lineage>
        <taxon>Eukaryota</taxon>
        <taxon>Metazoa</taxon>
        <taxon>Chordata</taxon>
        <taxon>Craniata</taxon>
        <taxon>Vertebrata</taxon>
        <taxon>Euteleostomi</taxon>
        <taxon>Mammalia</taxon>
        <taxon>Eutheria</taxon>
        <taxon>Euarchontoglires</taxon>
        <taxon>Primates</taxon>
        <taxon>Haplorrhini</taxon>
        <taxon>Catarrhini</taxon>
        <taxon>Hominidae</taxon>
        <taxon>Homo</taxon>
    </lineage>
</organism>
<dbReference type="EC" id="3.4.16.2"/>
<dbReference type="EMBL" id="L13977">
    <property type="protein sequence ID" value="AAA99891.1"/>
    <property type="molecule type" value="mRNA"/>
</dbReference>
<dbReference type="EMBL" id="AK091786">
    <property type="protein sequence ID" value="BAG52417.1"/>
    <property type="molecule type" value="mRNA"/>
</dbReference>
<dbReference type="EMBL" id="AK312919">
    <property type="protein sequence ID" value="BAG35764.1"/>
    <property type="molecule type" value="mRNA"/>
</dbReference>
<dbReference type="EMBL" id="AB451270">
    <property type="protein sequence ID" value="BAG70084.1"/>
    <property type="molecule type" value="mRNA"/>
</dbReference>
<dbReference type="EMBL" id="AB451397">
    <property type="protein sequence ID" value="BAG70211.1"/>
    <property type="molecule type" value="mRNA"/>
</dbReference>
<dbReference type="EMBL" id="AP000893">
    <property type="status" value="NOT_ANNOTATED_CDS"/>
    <property type="molecule type" value="Genomic_DNA"/>
</dbReference>
<dbReference type="EMBL" id="AP001646">
    <property type="status" value="NOT_ANNOTATED_CDS"/>
    <property type="molecule type" value="Genomic_DNA"/>
</dbReference>
<dbReference type="EMBL" id="CH471076">
    <property type="protein sequence ID" value="EAW75074.1"/>
    <property type="molecule type" value="Genomic_DNA"/>
</dbReference>
<dbReference type="EMBL" id="CH471076">
    <property type="protein sequence ID" value="EAW75075.1"/>
    <property type="molecule type" value="Genomic_DNA"/>
</dbReference>
<dbReference type="EMBL" id="BC001500">
    <property type="protein sequence ID" value="AAH01500.1"/>
    <property type="molecule type" value="mRNA"/>
</dbReference>
<dbReference type="CCDS" id="CCDS41695.1">
    <molecule id="P42785-2"/>
</dbReference>
<dbReference type="CCDS" id="CCDS8262.1">
    <molecule id="P42785-1"/>
</dbReference>
<dbReference type="PIR" id="A47352">
    <property type="entry name" value="A47352"/>
</dbReference>
<dbReference type="RefSeq" id="NP_001306143.1">
    <property type="nucleotide sequence ID" value="NM_001319214.1"/>
</dbReference>
<dbReference type="RefSeq" id="NP_005031.1">
    <molecule id="P42785-1"/>
    <property type="nucleotide sequence ID" value="NM_005040.4"/>
</dbReference>
<dbReference type="RefSeq" id="NP_955450.2">
    <molecule id="P42785-2"/>
    <property type="nucleotide sequence ID" value="NM_199418.4"/>
</dbReference>
<dbReference type="PDB" id="3N2Z">
    <property type="method" value="X-ray"/>
    <property type="resolution" value="2.79 A"/>
    <property type="chains" value="B=46-491"/>
</dbReference>
<dbReference type="PDBsum" id="3N2Z"/>
<dbReference type="SMR" id="P42785"/>
<dbReference type="BioGRID" id="111538">
    <property type="interactions" value="56"/>
</dbReference>
<dbReference type="FunCoup" id="P42785">
    <property type="interactions" value="1244"/>
</dbReference>
<dbReference type="IntAct" id="P42785">
    <property type="interactions" value="17"/>
</dbReference>
<dbReference type="STRING" id="9606.ENSP00000377055"/>
<dbReference type="BindingDB" id="P42785"/>
<dbReference type="ChEMBL" id="CHEMBL2335"/>
<dbReference type="DrugCentral" id="P42785"/>
<dbReference type="GuidetoPHARMACOLOGY" id="1584"/>
<dbReference type="ESTHER" id="human-PRCP">
    <property type="family name" value="Prolylcarboxypeptidase"/>
</dbReference>
<dbReference type="MEROPS" id="S28.001"/>
<dbReference type="GlyConnect" id="1478">
    <property type="glycosylation" value="9 N-Linked glycans (2 sites)"/>
</dbReference>
<dbReference type="GlyCosmos" id="P42785">
    <property type="glycosylation" value="7 sites, 10 glycans"/>
</dbReference>
<dbReference type="GlyGen" id="P42785">
    <property type="glycosylation" value="12 sites, 77 N-linked glycans (3 sites), 3 O-linked glycans (5 sites)"/>
</dbReference>
<dbReference type="iPTMnet" id="P42785"/>
<dbReference type="MetOSite" id="P42785"/>
<dbReference type="PhosphoSitePlus" id="P42785"/>
<dbReference type="BioMuta" id="PRCP"/>
<dbReference type="DMDM" id="1172047"/>
<dbReference type="jPOST" id="P42785"/>
<dbReference type="MassIVE" id="P42785"/>
<dbReference type="PaxDb" id="9606-ENSP00000377055"/>
<dbReference type="PeptideAtlas" id="P42785"/>
<dbReference type="ProteomicsDB" id="2074"/>
<dbReference type="ProteomicsDB" id="55558">
    <molecule id="P42785-1"/>
</dbReference>
<dbReference type="Pumba" id="P42785"/>
<dbReference type="Antibodypedia" id="2472">
    <property type="antibodies" value="241 antibodies from 27 providers"/>
</dbReference>
<dbReference type="DNASU" id="5547"/>
<dbReference type="Ensembl" id="ENST00000313010.8">
    <molecule id="P42785-1"/>
    <property type="protein sequence ID" value="ENSP00000317362.3"/>
    <property type="gene ID" value="ENSG00000137509.12"/>
</dbReference>
<dbReference type="Ensembl" id="ENST00000393399.6">
    <molecule id="P42785-2"/>
    <property type="protein sequence ID" value="ENSP00000377055.2"/>
    <property type="gene ID" value="ENSG00000137509.12"/>
</dbReference>
<dbReference type="GeneID" id="5547"/>
<dbReference type="KEGG" id="hsa:5547"/>
<dbReference type="MANE-Select" id="ENST00000313010.8">
    <property type="protein sequence ID" value="ENSP00000317362.3"/>
    <property type="RefSeq nucleotide sequence ID" value="NM_005040.4"/>
    <property type="RefSeq protein sequence ID" value="NP_005031.1"/>
</dbReference>
<dbReference type="UCSC" id="uc001ozr.4">
    <molecule id="P42785-1"/>
    <property type="organism name" value="human"/>
</dbReference>
<dbReference type="AGR" id="HGNC:9344"/>
<dbReference type="CTD" id="5547"/>
<dbReference type="DisGeNET" id="5547"/>
<dbReference type="GeneCards" id="PRCP"/>
<dbReference type="HGNC" id="HGNC:9344">
    <property type="gene designation" value="PRCP"/>
</dbReference>
<dbReference type="HPA" id="ENSG00000137509">
    <property type="expression patterns" value="Low tissue specificity"/>
</dbReference>
<dbReference type="MalaCards" id="PRCP"/>
<dbReference type="MIM" id="176785">
    <property type="type" value="gene"/>
</dbReference>
<dbReference type="neXtProt" id="NX_P42785"/>
<dbReference type="OpenTargets" id="ENSG00000137509"/>
<dbReference type="PharmGKB" id="PA33705"/>
<dbReference type="VEuPathDB" id="HostDB:ENSG00000137509"/>
<dbReference type="eggNOG" id="KOG2183">
    <property type="taxonomic scope" value="Eukaryota"/>
</dbReference>
<dbReference type="GeneTree" id="ENSGT00940000158099"/>
<dbReference type="HOGENOM" id="CLU_020959_0_0_1"/>
<dbReference type="InParanoid" id="P42785"/>
<dbReference type="OMA" id="QTCNQMV"/>
<dbReference type="OrthoDB" id="2130629at2759"/>
<dbReference type="PAN-GO" id="P42785">
    <property type="GO annotations" value="4 GO annotations based on evolutionary models"/>
</dbReference>
<dbReference type="PhylomeDB" id="P42785"/>
<dbReference type="TreeFam" id="TF314414"/>
<dbReference type="BRENDA" id="3.4.16.2">
    <property type="organism ID" value="2681"/>
</dbReference>
<dbReference type="PathwayCommons" id="P42785"/>
<dbReference type="Reactome" id="R-HSA-140837">
    <property type="pathway name" value="Intrinsic Pathway of Fibrin Clot Formation"/>
</dbReference>
<dbReference type="Reactome" id="R-HSA-6798695">
    <property type="pathway name" value="Neutrophil degranulation"/>
</dbReference>
<dbReference type="SignaLink" id="P42785"/>
<dbReference type="SIGNOR" id="P42785"/>
<dbReference type="BioGRID-ORCS" id="5547">
    <property type="hits" value="13 hits in 1151 CRISPR screens"/>
</dbReference>
<dbReference type="ChiTaRS" id="PRCP">
    <property type="organism name" value="human"/>
</dbReference>
<dbReference type="EvolutionaryTrace" id="P42785"/>
<dbReference type="GeneWiki" id="PRCP"/>
<dbReference type="GenomeRNAi" id="5547"/>
<dbReference type="Pharos" id="P42785">
    <property type="development level" value="Tchem"/>
</dbReference>
<dbReference type="PRO" id="PR:P42785"/>
<dbReference type="Proteomes" id="UP000005640">
    <property type="component" value="Chromosome 11"/>
</dbReference>
<dbReference type="RNAct" id="P42785">
    <property type="molecule type" value="protein"/>
</dbReference>
<dbReference type="Bgee" id="ENSG00000137509">
    <property type="expression patterns" value="Expressed in tendon of biceps brachii and 213 other cell types or tissues"/>
</dbReference>
<dbReference type="ExpressionAtlas" id="P42785">
    <property type="expression patterns" value="baseline and differential"/>
</dbReference>
<dbReference type="GO" id="GO:0035577">
    <property type="term" value="C:azurophil granule membrane"/>
    <property type="evidence" value="ECO:0000304"/>
    <property type="project" value="Reactome"/>
</dbReference>
<dbReference type="GO" id="GO:0045178">
    <property type="term" value="C:basal part of cell"/>
    <property type="evidence" value="ECO:0007669"/>
    <property type="project" value="Ensembl"/>
</dbReference>
<dbReference type="GO" id="GO:0070062">
    <property type="term" value="C:extracellular exosome"/>
    <property type="evidence" value="ECO:0007005"/>
    <property type="project" value="UniProtKB"/>
</dbReference>
<dbReference type="GO" id="GO:0101003">
    <property type="term" value="C:ficolin-1-rich granule membrane"/>
    <property type="evidence" value="ECO:0000304"/>
    <property type="project" value="Reactome"/>
</dbReference>
<dbReference type="GO" id="GO:0043231">
    <property type="term" value="C:intracellular membrane-bounded organelle"/>
    <property type="evidence" value="ECO:0000314"/>
    <property type="project" value="HPA"/>
</dbReference>
<dbReference type="GO" id="GO:0005886">
    <property type="term" value="C:plasma membrane"/>
    <property type="evidence" value="ECO:0000304"/>
    <property type="project" value="Reactome"/>
</dbReference>
<dbReference type="GO" id="GO:0008239">
    <property type="term" value="F:dipeptidyl-peptidase activity"/>
    <property type="evidence" value="ECO:0000318"/>
    <property type="project" value="GO_Central"/>
</dbReference>
<dbReference type="GO" id="GO:0004181">
    <property type="term" value="F:metallocarboxypeptidase activity"/>
    <property type="evidence" value="ECO:0007669"/>
    <property type="project" value="Ensembl"/>
</dbReference>
<dbReference type="GO" id="GO:0004185">
    <property type="term" value="F:serine-type carboxypeptidase activity"/>
    <property type="evidence" value="ECO:0000304"/>
    <property type="project" value="ProtInc"/>
</dbReference>
<dbReference type="GO" id="GO:0060055">
    <property type="term" value="P:angiogenesis involved in wound healing"/>
    <property type="evidence" value="ECO:0000318"/>
    <property type="project" value="GO_Central"/>
</dbReference>
<dbReference type="GO" id="GO:0002003">
    <property type="term" value="P:angiotensin maturation"/>
    <property type="evidence" value="ECO:0007669"/>
    <property type="project" value="Ensembl"/>
</dbReference>
<dbReference type="GO" id="GO:0097009">
    <property type="term" value="P:energy homeostasis"/>
    <property type="evidence" value="ECO:0007669"/>
    <property type="project" value="Ensembl"/>
</dbReference>
<dbReference type="GO" id="GO:0042593">
    <property type="term" value="P:glucose homeostasis"/>
    <property type="evidence" value="ECO:0007669"/>
    <property type="project" value="Ensembl"/>
</dbReference>
<dbReference type="GO" id="GO:0003085">
    <property type="term" value="P:negative regulation of systemic arterial blood pressure"/>
    <property type="evidence" value="ECO:0000318"/>
    <property type="project" value="GO_Central"/>
</dbReference>
<dbReference type="GO" id="GO:0002353">
    <property type="term" value="P:plasma kallikrein-kinin cascade"/>
    <property type="evidence" value="ECO:0007669"/>
    <property type="project" value="Ensembl"/>
</dbReference>
<dbReference type="GO" id="GO:0043535">
    <property type="term" value="P:regulation of blood vessel endothelial cell migration"/>
    <property type="evidence" value="ECO:0000318"/>
    <property type="project" value="GO_Central"/>
</dbReference>
<dbReference type="GO" id="GO:2000377">
    <property type="term" value="P:regulation of reactive oxygen species metabolic process"/>
    <property type="evidence" value="ECO:0007669"/>
    <property type="project" value="Ensembl"/>
</dbReference>
<dbReference type="GO" id="GO:0002155">
    <property type="term" value="P:regulation of thyroid hormone receptor signaling pathway"/>
    <property type="evidence" value="ECO:0007669"/>
    <property type="project" value="Ensembl"/>
</dbReference>
<dbReference type="FunFam" id="1.20.120.980:FF:000002">
    <property type="entry name" value="lysosomal Pro-X carboxypeptidase"/>
    <property type="match status" value="1"/>
</dbReference>
<dbReference type="Gene3D" id="3.40.50.1820">
    <property type="entry name" value="alpha/beta hydrolase"/>
    <property type="match status" value="1"/>
</dbReference>
<dbReference type="Gene3D" id="1.20.120.980">
    <property type="entry name" value="Serine carboxypeptidase S28, SKS domain"/>
    <property type="match status" value="1"/>
</dbReference>
<dbReference type="InterPro" id="IPR029058">
    <property type="entry name" value="AB_hydrolase_fold"/>
</dbReference>
<dbReference type="InterPro" id="IPR008758">
    <property type="entry name" value="Peptidase_S28"/>
</dbReference>
<dbReference type="InterPro" id="IPR042269">
    <property type="entry name" value="Ser_carbopepase_S28_SKS"/>
</dbReference>
<dbReference type="PANTHER" id="PTHR11010:SF38">
    <property type="entry name" value="LYSOSOMAL PRO-X CARBOXYPEPTIDASE"/>
    <property type="match status" value="1"/>
</dbReference>
<dbReference type="PANTHER" id="PTHR11010">
    <property type="entry name" value="PROTEASE S28 PRO-X CARBOXYPEPTIDASE-RELATED"/>
    <property type="match status" value="1"/>
</dbReference>
<dbReference type="Pfam" id="PF05577">
    <property type="entry name" value="Peptidase_S28"/>
    <property type="match status" value="1"/>
</dbReference>
<dbReference type="SUPFAM" id="SSF53474">
    <property type="entry name" value="alpha/beta-Hydrolases"/>
    <property type="match status" value="1"/>
</dbReference>
<feature type="signal peptide" evidence="1">
    <location>
        <begin position="1"/>
        <end position="21"/>
    </location>
</feature>
<feature type="propeptide" id="PRO_0000027308">
    <location>
        <begin position="22"/>
        <end position="45"/>
    </location>
</feature>
<feature type="chain" id="PRO_0000027309" description="Lysosomal Pro-X carboxypeptidase">
    <location>
        <begin position="46"/>
        <end position="496"/>
    </location>
</feature>
<feature type="region of interest" description="SKS domain">
    <location>
        <begin position="194"/>
        <end position="334"/>
    </location>
</feature>
<feature type="active site" description="Charge relay system" evidence="4">
    <location>
        <position position="179"/>
    </location>
</feature>
<feature type="active site" description="Charge relay system" evidence="4">
    <location>
        <position position="430"/>
    </location>
</feature>
<feature type="active site" description="Charge relay system" evidence="4">
    <location>
        <position position="455"/>
    </location>
</feature>
<feature type="glycosylation site" description="N-linked (GlcNAc...) asparagine" evidence="1">
    <location>
        <position position="47"/>
    </location>
</feature>
<feature type="glycosylation site" description="N-linked (GlcNAc...) asparagine" evidence="4">
    <location>
        <position position="101"/>
    </location>
</feature>
<feature type="glycosylation site" description="N-linked (GlcNAc...) asparagine" evidence="3 4">
    <location>
        <position position="317"/>
    </location>
</feature>
<feature type="glycosylation site" description="N-linked (GlcNAc...) asparagine" evidence="4">
    <location>
        <position position="336"/>
    </location>
</feature>
<feature type="glycosylation site" description="N-linked (GlcNAc...) asparagine" evidence="4">
    <location>
        <position position="345"/>
    </location>
</feature>
<feature type="glycosylation site" description="N-linked (GlcNAc...) asparagine" evidence="3 4">
    <location>
        <position position="415"/>
    </location>
</feature>
<feature type="disulfide bond" evidence="4">
    <location>
        <begin position="215"/>
        <end position="372"/>
    </location>
</feature>
<feature type="disulfide bond" evidence="4">
    <location>
        <begin position="233"/>
        <end position="310"/>
    </location>
</feature>
<feature type="disulfide bond" evidence="4">
    <location>
        <begin position="264"/>
        <end position="343"/>
    </location>
</feature>
<feature type="disulfide bond" evidence="4">
    <location>
        <begin position="364"/>
        <end position="394"/>
    </location>
</feature>
<feature type="splice variant" id="VSP_045799" description="In isoform 2." evidence="5">
    <original>K</original>
    <variation>KALAAGQLHICIIQLNHYKTPL</variation>
    <location>
        <position position="56"/>
    </location>
</feature>
<feature type="sequence variant" id="VAR_020464" description="In dbSNP:rs2229437." evidence="2">
    <original>E</original>
    <variation>D</variation>
    <location>
        <position position="112"/>
    </location>
</feature>
<feature type="sequence variant" id="VAR_029329" description="In dbSNP:rs2228312.">
    <original>T</original>
    <variation>S</variation>
    <location>
        <position position="444"/>
    </location>
</feature>
<feature type="sequence conflict" description="In Ref. 3; BAG52417." evidence="6" ref="3">
    <original>G</original>
    <variation>E</variation>
    <location>
        <position position="104"/>
    </location>
</feature>
<feature type="sequence conflict" description="In Ref. 3; BAG52417." evidence="6" ref="3">
    <original>S</original>
    <variation>L</variation>
    <location>
        <position position="248"/>
    </location>
</feature>
<feature type="sequence conflict" description="In Ref. 3; BAG52417." evidence="6" ref="3">
    <original>W</original>
    <variation>R</variation>
    <location>
        <position position="304"/>
    </location>
</feature>
<feature type="strand" evidence="7">
    <location>
        <begin position="49"/>
        <end position="57"/>
    </location>
</feature>
<feature type="strand" evidence="7">
    <location>
        <begin position="67"/>
        <end position="75"/>
    </location>
</feature>
<feature type="turn" evidence="7">
    <location>
        <begin position="81"/>
        <end position="83"/>
    </location>
</feature>
<feature type="strand" evidence="7">
    <location>
        <begin position="85"/>
        <end position="90"/>
    </location>
</feature>
<feature type="helix" evidence="7">
    <location>
        <begin position="96"/>
        <end position="102"/>
    </location>
</feature>
<feature type="helix" evidence="7">
    <location>
        <begin position="104"/>
        <end position="113"/>
    </location>
</feature>
<feature type="strand" evidence="7">
    <location>
        <begin position="115"/>
        <end position="120"/>
    </location>
</feature>
<feature type="helix" evidence="7">
    <location>
        <begin position="132"/>
        <end position="136"/>
    </location>
</feature>
<feature type="turn" evidence="7">
    <location>
        <begin position="139"/>
        <end position="141"/>
    </location>
</feature>
<feature type="helix" evidence="7">
    <location>
        <begin position="147"/>
        <end position="164"/>
    </location>
</feature>
<feature type="helix" evidence="7">
    <location>
        <begin position="168"/>
        <end position="170"/>
    </location>
</feature>
<feature type="strand" evidence="7">
    <location>
        <begin position="173"/>
        <end position="178"/>
    </location>
</feature>
<feature type="helix" evidence="7">
    <location>
        <begin position="180"/>
        <end position="191"/>
    </location>
</feature>
<feature type="turn" evidence="7">
    <location>
        <begin position="193"/>
        <end position="195"/>
    </location>
</feature>
<feature type="strand" evidence="7">
    <location>
        <begin position="197"/>
        <end position="202"/>
    </location>
</feature>
<feature type="helix" evidence="7">
    <location>
        <begin position="217"/>
        <end position="227"/>
    </location>
</feature>
<feature type="helix" evidence="7">
    <location>
        <begin position="233"/>
        <end position="247"/>
    </location>
</feature>
<feature type="helix" evidence="7">
    <location>
        <begin position="251"/>
        <end position="260"/>
    </location>
</feature>
<feature type="strand" evidence="7">
    <location>
        <begin position="263"/>
        <end position="265"/>
    </location>
</feature>
<feature type="helix" evidence="7">
    <location>
        <begin position="272"/>
        <end position="288"/>
    </location>
</feature>
<feature type="strand" evidence="7">
    <location>
        <begin position="295"/>
        <end position="301"/>
    </location>
</feature>
<feature type="helix" evidence="7">
    <location>
        <begin position="305"/>
        <end position="312"/>
    </location>
</feature>
<feature type="helix" evidence="7">
    <location>
        <begin position="320"/>
        <end position="336"/>
    </location>
</feature>
<feature type="strand" evidence="7">
    <location>
        <begin position="342"/>
        <end position="344"/>
    </location>
</feature>
<feature type="helix" evidence="7">
    <location>
        <begin position="354"/>
        <end position="365"/>
    </location>
</feature>
<feature type="strand" evidence="7">
    <location>
        <begin position="375"/>
        <end position="380"/>
    </location>
</feature>
<feature type="helix" evidence="7">
    <location>
        <begin position="387"/>
        <end position="398"/>
    </location>
</feature>
<feature type="helix" evidence="7">
    <location>
        <begin position="406"/>
        <end position="411"/>
    </location>
</feature>
<feature type="strand" evidence="7">
    <location>
        <begin position="422"/>
        <end position="429"/>
    </location>
</feature>
<feature type="helix" evidence="7">
    <location>
        <begin position="431"/>
        <end position="435"/>
    </location>
</feature>
<feature type="strand" evidence="7">
    <location>
        <begin position="441"/>
        <end position="450"/>
    </location>
</feature>
<feature type="helix" evidence="7">
    <location>
        <begin position="457"/>
        <end position="459"/>
    </location>
</feature>
<feature type="helix" evidence="7">
    <location>
        <begin position="468"/>
        <end position="489"/>
    </location>
</feature>
<protein>
    <recommendedName>
        <fullName>Lysosomal Pro-X carboxypeptidase</fullName>
        <ecNumber>3.4.16.2</ecNumber>
    </recommendedName>
    <alternativeName>
        <fullName>Angiotensinase C</fullName>
    </alternativeName>
    <alternativeName>
        <fullName>Lysosomal carboxypeptidase C</fullName>
    </alternativeName>
    <alternativeName>
        <fullName>Proline carboxypeptidase</fullName>
    </alternativeName>
    <alternativeName>
        <fullName>Prolylcarboxypeptidase</fullName>
        <shortName>PRCP</shortName>
    </alternativeName>
</protein>